<geneLocation type="chloroplast"/>
<accession>B2XT86</accession>
<dbReference type="EMBL" id="EU168190">
    <property type="protein sequence ID" value="ABV65984.1"/>
    <property type="molecule type" value="Genomic_DNA"/>
</dbReference>
<dbReference type="RefSeq" id="YP_001936378.1">
    <property type="nucleotide sequence ID" value="NC_010772.1"/>
</dbReference>
<dbReference type="SMR" id="B2XT86"/>
<dbReference type="GeneID" id="6335586"/>
<dbReference type="GO" id="GO:0009535">
    <property type="term" value="C:chloroplast thylakoid membrane"/>
    <property type="evidence" value="ECO:0007669"/>
    <property type="project" value="UniProtKB-SubCell"/>
</dbReference>
<dbReference type="GO" id="GO:0045259">
    <property type="term" value="C:proton-transporting ATP synthase complex"/>
    <property type="evidence" value="ECO:0007669"/>
    <property type="project" value="UniProtKB-KW"/>
</dbReference>
<dbReference type="GO" id="GO:0033177">
    <property type="term" value="C:proton-transporting two-sector ATPase complex, proton-transporting domain"/>
    <property type="evidence" value="ECO:0007669"/>
    <property type="project" value="InterPro"/>
</dbReference>
<dbReference type="GO" id="GO:0008289">
    <property type="term" value="F:lipid binding"/>
    <property type="evidence" value="ECO:0007669"/>
    <property type="project" value="UniProtKB-KW"/>
</dbReference>
<dbReference type="GO" id="GO:0046933">
    <property type="term" value="F:proton-transporting ATP synthase activity, rotational mechanism"/>
    <property type="evidence" value="ECO:0007669"/>
    <property type="project" value="UniProtKB-UniRule"/>
</dbReference>
<dbReference type="CDD" id="cd18183">
    <property type="entry name" value="ATP-synt_Fo_c_ATPH"/>
    <property type="match status" value="1"/>
</dbReference>
<dbReference type="FunFam" id="1.20.20.10:FF:000001">
    <property type="entry name" value="ATP synthase subunit c, chloroplastic"/>
    <property type="match status" value="1"/>
</dbReference>
<dbReference type="Gene3D" id="1.20.20.10">
    <property type="entry name" value="F1F0 ATP synthase subunit C"/>
    <property type="match status" value="1"/>
</dbReference>
<dbReference type="HAMAP" id="MF_01396">
    <property type="entry name" value="ATP_synth_c_bact"/>
    <property type="match status" value="1"/>
</dbReference>
<dbReference type="InterPro" id="IPR005953">
    <property type="entry name" value="ATP_synth_csu_bac/chlpt"/>
</dbReference>
<dbReference type="InterPro" id="IPR000454">
    <property type="entry name" value="ATP_synth_F0_csu"/>
</dbReference>
<dbReference type="InterPro" id="IPR020537">
    <property type="entry name" value="ATP_synth_F0_csu_DDCD_BS"/>
</dbReference>
<dbReference type="InterPro" id="IPR038662">
    <property type="entry name" value="ATP_synth_F0_csu_sf"/>
</dbReference>
<dbReference type="InterPro" id="IPR002379">
    <property type="entry name" value="ATPase_proteolipid_c-like_dom"/>
</dbReference>
<dbReference type="InterPro" id="IPR035921">
    <property type="entry name" value="F/V-ATP_Csub_sf"/>
</dbReference>
<dbReference type="NCBIfam" id="TIGR01260">
    <property type="entry name" value="ATP_synt_c"/>
    <property type="match status" value="1"/>
</dbReference>
<dbReference type="NCBIfam" id="NF005608">
    <property type="entry name" value="PRK07354.1"/>
    <property type="match status" value="1"/>
</dbReference>
<dbReference type="PANTHER" id="PTHR10031">
    <property type="entry name" value="ATP SYNTHASE LIPID-BINDING PROTEIN, MITOCHONDRIAL"/>
    <property type="match status" value="1"/>
</dbReference>
<dbReference type="PANTHER" id="PTHR10031:SF0">
    <property type="entry name" value="ATPASE PROTEIN 9"/>
    <property type="match status" value="1"/>
</dbReference>
<dbReference type="Pfam" id="PF00137">
    <property type="entry name" value="ATP-synt_C"/>
    <property type="match status" value="1"/>
</dbReference>
<dbReference type="PRINTS" id="PR00124">
    <property type="entry name" value="ATPASEC"/>
</dbReference>
<dbReference type="SUPFAM" id="SSF81333">
    <property type="entry name" value="F1F0 ATP synthase subunit C"/>
    <property type="match status" value="1"/>
</dbReference>
<dbReference type="PROSITE" id="PS00605">
    <property type="entry name" value="ATPASE_C"/>
    <property type="match status" value="1"/>
</dbReference>
<name>ATPH_HETA2</name>
<reference key="1">
    <citation type="journal article" date="2008" name="BMC Genomics">
        <title>Chloroplast genome sequencing analysis of Heterosigma akashiwo CCMP452 (West Atlantic) and NIES293 (West Pacific) strains.</title>
        <authorList>
            <person name="Cattolico R.A."/>
            <person name="Jacobs M.A."/>
            <person name="Zhou Y."/>
            <person name="Chang J."/>
            <person name="Duplessis M."/>
            <person name="Lybrand T."/>
            <person name="McKay J."/>
            <person name="Ong H.C."/>
            <person name="Sims E."/>
            <person name="Rocap G."/>
        </authorList>
    </citation>
    <scope>NUCLEOTIDE SEQUENCE [LARGE SCALE GENOMIC DNA]</scope>
</reference>
<gene>
    <name evidence="1" type="primary">atpH</name>
    <name type="ordered locus">Heak293_Cp077</name>
</gene>
<comment type="function">
    <text evidence="1">F(1)F(0) ATP synthase produces ATP from ADP in the presence of a proton or sodium gradient. F-type ATPases consist of two structural domains, F(1) containing the extramembraneous catalytic core and F(0) containing the membrane proton channel, linked together by a central stalk and a peripheral stalk. During catalysis, ATP synthesis in the catalytic domain of F(1) is coupled via a rotary mechanism of the central stalk subunits to proton translocation.</text>
</comment>
<comment type="function">
    <text evidence="1">Key component of the F(0) channel; it plays a direct role in translocation across the membrane. A homomeric c-ring of between 10-14 subunits forms the central stalk rotor element with the F(1) delta and epsilon subunits.</text>
</comment>
<comment type="subunit">
    <text evidence="1">F-type ATPases have 2 components, F(1) - the catalytic core - and F(0) - the membrane proton channel. F(1) has five subunits: alpha(3), beta(3), gamma(1), delta(1), epsilon(1). F(0) has four main subunits: a(1), b(1), b'(1) and c(10-14). The alpha and beta chains form an alternating ring which encloses part of the gamma chain. F(1) is attached to F(0) by a central stalk formed by the gamma and epsilon chains, while a peripheral stalk is formed by the delta, b and b' chains.</text>
</comment>
<comment type="subcellular location">
    <subcellularLocation>
        <location evidence="1">Plastid</location>
        <location evidence="1">Chloroplast thylakoid membrane</location>
        <topology evidence="1">Multi-pass membrane protein</topology>
    </subcellularLocation>
</comment>
<comment type="miscellaneous">
    <text>In plastids the F-type ATPase is also known as CF(1)CF(0).</text>
</comment>
<comment type="similarity">
    <text evidence="1">Belongs to the ATPase C chain family.</text>
</comment>
<sequence length="82" mass="8171">MDSIISAASVIAAGLSVGLAAIGPGIGQGNAAGQAVEGIARQPEAENKIRGTLLLSLAFMEALTIYGLVVALSLLFANPFTS</sequence>
<organism>
    <name type="scientific">Heterosigma akashiwo (strain NIES-293 / 8280G21-1)</name>
    <dbReference type="NCBI Taxonomy" id="536047"/>
    <lineage>
        <taxon>Eukaryota</taxon>
        <taxon>Sar</taxon>
        <taxon>Stramenopiles</taxon>
        <taxon>Ochrophyta</taxon>
        <taxon>Raphidophyceae</taxon>
        <taxon>Chattonellales</taxon>
        <taxon>Chattonellaceae</taxon>
        <taxon>Heterosigma</taxon>
    </lineage>
</organism>
<protein>
    <recommendedName>
        <fullName evidence="1">ATP synthase subunit c, chloroplastic</fullName>
    </recommendedName>
    <alternativeName>
        <fullName evidence="1">ATP synthase F(0) sector subunit c</fullName>
    </alternativeName>
    <alternativeName>
        <fullName evidence="1">ATPase subunit III</fullName>
    </alternativeName>
    <alternativeName>
        <fullName evidence="1">F-type ATPase subunit c</fullName>
        <shortName evidence="1">F-ATPase subunit c</shortName>
    </alternativeName>
    <alternativeName>
        <fullName evidence="1">Lipid-binding protein</fullName>
    </alternativeName>
</protein>
<evidence type="ECO:0000255" key="1">
    <source>
        <dbReference type="HAMAP-Rule" id="MF_01396"/>
    </source>
</evidence>
<keyword id="KW-0066">ATP synthesis</keyword>
<keyword id="KW-0138">CF(0)</keyword>
<keyword id="KW-0150">Chloroplast</keyword>
<keyword id="KW-0375">Hydrogen ion transport</keyword>
<keyword id="KW-0406">Ion transport</keyword>
<keyword id="KW-0446">Lipid-binding</keyword>
<keyword id="KW-0472">Membrane</keyword>
<keyword id="KW-0934">Plastid</keyword>
<keyword id="KW-0793">Thylakoid</keyword>
<keyword id="KW-0812">Transmembrane</keyword>
<keyword id="KW-1133">Transmembrane helix</keyword>
<keyword id="KW-0813">Transport</keyword>
<feature type="chain" id="PRO_0000362976" description="ATP synthase subunit c, chloroplastic">
    <location>
        <begin position="1"/>
        <end position="82"/>
    </location>
</feature>
<feature type="transmembrane region" description="Helical" evidence="1">
    <location>
        <begin position="4"/>
        <end position="24"/>
    </location>
</feature>
<feature type="transmembrane region" description="Helical" evidence="1">
    <location>
        <begin position="57"/>
        <end position="77"/>
    </location>
</feature>
<feature type="site" description="Reversibly protonated during proton transport" evidence="1">
    <location>
        <position position="61"/>
    </location>
</feature>
<proteinExistence type="inferred from homology"/>